<keyword id="KW-0012">Acyltransferase</keyword>
<keyword id="KW-0028">Amino-acid biosynthesis</keyword>
<keyword id="KW-0220">Diaminopimelate biosynthesis</keyword>
<keyword id="KW-0457">Lysine biosynthesis</keyword>
<keyword id="KW-0677">Repeat</keyword>
<keyword id="KW-0808">Transferase</keyword>
<feature type="chain" id="PRO_0000376692" description="2,3,4,5-tetrahydropyridine-2,6-dicarboxylate N-acetyltransferase">
    <location>
        <begin position="1"/>
        <end position="239"/>
    </location>
</feature>
<name>DAPH_STAAS</name>
<sequence>MVQHLTAEEIIQYISDAKKSTPIKVYLNGNFEGITYPESFKVFGSEQSKVIFCEADDWKPFYEAYGSQFEDIEIEMDRRNSAIPLKDLTNTNARIEPGAFIREQAIIEDGAVVMMGATINIGAVVGEGTMIDMNATLGGRATTGKNVHVGAGAVLAGVIEPPSASPVIIEDDVLIGANAVILEGVRVGKGAIVAAGAIVTQDVPAGAVVAGTPAKVIKQASEVQDTKKEIVAALRKLND</sequence>
<organism>
    <name type="scientific">Staphylococcus aureus (strain MSSA476)</name>
    <dbReference type="NCBI Taxonomy" id="282459"/>
    <lineage>
        <taxon>Bacteria</taxon>
        <taxon>Bacillati</taxon>
        <taxon>Bacillota</taxon>
        <taxon>Bacilli</taxon>
        <taxon>Bacillales</taxon>
        <taxon>Staphylococcaceae</taxon>
        <taxon>Staphylococcus</taxon>
    </lineage>
</organism>
<reference key="1">
    <citation type="journal article" date="2004" name="Proc. Natl. Acad. Sci. U.S.A.">
        <title>Complete genomes of two clinical Staphylococcus aureus strains: evidence for the rapid evolution of virulence and drug resistance.</title>
        <authorList>
            <person name="Holden M.T.G."/>
            <person name="Feil E.J."/>
            <person name="Lindsay J.A."/>
            <person name="Peacock S.J."/>
            <person name="Day N.P.J."/>
            <person name="Enright M.C."/>
            <person name="Foster T.J."/>
            <person name="Moore C.E."/>
            <person name="Hurst L."/>
            <person name="Atkin R."/>
            <person name="Barron A."/>
            <person name="Bason N."/>
            <person name="Bentley S.D."/>
            <person name="Chillingworth C."/>
            <person name="Chillingworth T."/>
            <person name="Churcher C."/>
            <person name="Clark L."/>
            <person name="Corton C."/>
            <person name="Cronin A."/>
            <person name="Doggett J."/>
            <person name="Dowd L."/>
            <person name="Feltwell T."/>
            <person name="Hance Z."/>
            <person name="Harris B."/>
            <person name="Hauser H."/>
            <person name="Holroyd S."/>
            <person name="Jagels K."/>
            <person name="James K.D."/>
            <person name="Lennard N."/>
            <person name="Line A."/>
            <person name="Mayes R."/>
            <person name="Moule S."/>
            <person name="Mungall K."/>
            <person name="Ormond D."/>
            <person name="Quail M.A."/>
            <person name="Rabbinowitsch E."/>
            <person name="Rutherford K.M."/>
            <person name="Sanders M."/>
            <person name="Sharp S."/>
            <person name="Simmonds M."/>
            <person name="Stevens K."/>
            <person name="Whitehead S."/>
            <person name="Barrell B.G."/>
            <person name="Spratt B.G."/>
            <person name="Parkhill J."/>
        </authorList>
    </citation>
    <scope>NUCLEOTIDE SEQUENCE [LARGE SCALE GENOMIC DNA]</scope>
    <source>
        <strain>MSSA476</strain>
    </source>
</reference>
<gene>
    <name evidence="1" type="primary">dapH</name>
    <name type="ordered locus">SAS1338</name>
</gene>
<accession>Q6G9G4</accession>
<protein>
    <recommendedName>
        <fullName evidence="1">2,3,4,5-tetrahydropyridine-2,6-dicarboxylate N-acetyltransferase</fullName>
        <ecNumber evidence="1">2.3.1.89</ecNumber>
    </recommendedName>
    <alternativeName>
        <fullName evidence="1">Tetrahydrodipicolinate N-acetyltransferase</fullName>
        <shortName evidence="1">THP acetyltransferase</shortName>
        <shortName evidence="1">Tetrahydropicolinate acetylase</shortName>
    </alternativeName>
</protein>
<comment type="function">
    <text evidence="1">Catalyzes the transfer of an acetyl group from acetyl-CoA to tetrahydrodipicolinate.</text>
</comment>
<comment type="catalytic activity">
    <reaction evidence="1">
        <text>(S)-2,3,4,5-tetrahydrodipicolinate + acetyl-CoA + H2O = L-2-acetamido-6-oxoheptanedioate + CoA</text>
        <dbReference type="Rhea" id="RHEA:13085"/>
        <dbReference type="ChEBI" id="CHEBI:15377"/>
        <dbReference type="ChEBI" id="CHEBI:16845"/>
        <dbReference type="ChEBI" id="CHEBI:57287"/>
        <dbReference type="ChEBI" id="CHEBI:57288"/>
        <dbReference type="ChEBI" id="CHEBI:58117"/>
        <dbReference type="EC" id="2.3.1.89"/>
    </reaction>
</comment>
<comment type="pathway">
    <text evidence="1">Amino-acid biosynthesis; L-lysine biosynthesis via DAP pathway; LL-2,6-diaminopimelate from (S)-tetrahydrodipicolinate (acetylase route): step 1/3.</text>
</comment>
<comment type="similarity">
    <text evidence="1">Belongs to the transferase hexapeptide repeat family. DapH subfamily.</text>
</comment>
<evidence type="ECO:0000255" key="1">
    <source>
        <dbReference type="HAMAP-Rule" id="MF_01691"/>
    </source>
</evidence>
<proteinExistence type="inferred from homology"/>
<dbReference type="EC" id="2.3.1.89" evidence="1"/>
<dbReference type="EMBL" id="BX571857">
    <property type="protein sequence ID" value="CAG43114.1"/>
    <property type="molecule type" value="Genomic_DNA"/>
</dbReference>
<dbReference type="SMR" id="Q6G9G4"/>
<dbReference type="KEGG" id="sas:SAS1338"/>
<dbReference type="HOGENOM" id="CLU_103751_0_0_9"/>
<dbReference type="UniPathway" id="UPA00034">
    <property type="reaction ID" value="UER00022"/>
</dbReference>
<dbReference type="GO" id="GO:0047200">
    <property type="term" value="F:tetrahydrodipicolinate N-acetyltransferase activity"/>
    <property type="evidence" value="ECO:0007669"/>
    <property type="project" value="UniProtKB-EC"/>
</dbReference>
<dbReference type="GO" id="GO:0019877">
    <property type="term" value="P:diaminopimelate biosynthetic process"/>
    <property type="evidence" value="ECO:0007669"/>
    <property type="project" value="UniProtKB-UniRule"/>
</dbReference>
<dbReference type="GO" id="GO:0009089">
    <property type="term" value="P:lysine biosynthetic process via diaminopimelate"/>
    <property type="evidence" value="ECO:0007669"/>
    <property type="project" value="UniProtKB-UniRule"/>
</dbReference>
<dbReference type="CDD" id="cd03350">
    <property type="entry name" value="LbH_THP_succinylT"/>
    <property type="match status" value="1"/>
</dbReference>
<dbReference type="Gene3D" id="2.160.10.10">
    <property type="entry name" value="Hexapeptide repeat proteins"/>
    <property type="match status" value="1"/>
</dbReference>
<dbReference type="Gene3D" id="3.30.70.250">
    <property type="entry name" value="Malonyl-CoA ACP transacylase, ACP-binding"/>
    <property type="match status" value="1"/>
</dbReference>
<dbReference type="HAMAP" id="MF_01691">
    <property type="entry name" value="DapH"/>
    <property type="match status" value="1"/>
</dbReference>
<dbReference type="InterPro" id="IPR019873">
    <property type="entry name" value="DapH"/>
</dbReference>
<dbReference type="InterPro" id="IPR013710">
    <property type="entry name" value="DapH_N"/>
</dbReference>
<dbReference type="InterPro" id="IPR001451">
    <property type="entry name" value="Hexapep"/>
</dbReference>
<dbReference type="InterPro" id="IPR018357">
    <property type="entry name" value="Hexapep_transf_CS"/>
</dbReference>
<dbReference type="InterPro" id="IPR050179">
    <property type="entry name" value="Trans_hexapeptide_repeat"/>
</dbReference>
<dbReference type="InterPro" id="IPR011004">
    <property type="entry name" value="Trimer_LpxA-like_sf"/>
</dbReference>
<dbReference type="NCBIfam" id="TIGR03532">
    <property type="entry name" value="DapD_Ac"/>
    <property type="match status" value="1"/>
</dbReference>
<dbReference type="PANTHER" id="PTHR43300:SF10">
    <property type="entry name" value="2,3,4,5-TETRAHYDROPYRIDINE-2,6-DICARBOXYLATE N-ACETYLTRANSFERASE"/>
    <property type="match status" value="1"/>
</dbReference>
<dbReference type="PANTHER" id="PTHR43300">
    <property type="entry name" value="ACETYLTRANSFERASE"/>
    <property type="match status" value="1"/>
</dbReference>
<dbReference type="Pfam" id="PF08503">
    <property type="entry name" value="DapH_N"/>
    <property type="match status" value="1"/>
</dbReference>
<dbReference type="Pfam" id="PF00132">
    <property type="entry name" value="Hexapep"/>
    <property type="match status" value="1"/>
</dbReference>
<dbReference type="Pfam" id="PF14602">
    <property type="entry name" value="Hexapep_2"/>
    <property type="match status" value="1"/>
</dbReference>
<dbReference type="SUPFAM" id="SSF51161">
    <property type="entry name" value="Trimeric LpxA-like enzymes"/>
    <property type="match status" value="1"/>
</dbReference>
<dbReference type="PROSITE" id="PS00101">
    <property type="entry name" value="HEXAPEP_TRANSFERASES"/>
    <property type="match status" value="1"/>
</dbReference>